<accession>P0DRC6</accession>
<evidence type="ECO:0000255" key="1">
    <source>
        <dbReference type="PROSITE-ProRule" id="PRU01210"/>
    </source>
</evidence>
<evidence type="ECO:0000269" key="2">
    <source>
    </source>
</evidence>
<evidence type="ECO:0000269" key="3">
    <source>
    </source>
</evidence>
<evidence type="ECO:0000303" key="4">
    <source>
    </source>
</evidence>
<evidence type="ECO:0000305" key="5"/>
<evidence type="ECO:0000305" key="6">
    <source>
    </source>
</evidence>
<name>SCX13_CENSC</name>
<sequence>SKKEIPGGYPVNQFKCTYECAHADTDHIRCKNLCKKLGGSWGYCYWNTCYCEYLPDSVPQKNSIEVFSCGATIVGVPDTEQQ</sequence>
<reference key="1">
    <citation type="journal article" date="2021" name="Toxins">
        <title>Identification and characterization of novel proteins from Arizona Bark scorpion venom that inhibit Nav1.8, a voltage-gated sodium channel regulator of pain signaling.</title>
        <authorList>
            <person name="Abd El-Aziz T.M."/>
            <person name="Xiao Y."/>
            <person name="Kline J."/>
            <person name="Gridley H."/>
            <person name="Heaston A."/>
            <person name="Linse K.D."/>
            <person name="Ward M.J."/>
            <person name="Rokyta D.R."/>
            <person name="Stockand J.D."/>
            <person name="Cummins T.R."/>
            <person name="Fornelli L."/>
            <person name="Rowe A.H."/>
        </authorList>
    </citation>
    <scope>NUCLEOTIDE SEQUENCE [MRNA]</scope>
    <scope>PROTEIN SEQUENCE OF 36-61</scope>
    <scope>IDENTIFICATION BY MASS SPECTROMETRY</scope>
    <scope>SUBCELLULAR LOCATION</scope>
    <source>
        <tissue>Venom</tissue>
        <tissue>Venom gland</tissue>
    </source>
</reference>
<reference key="2">
    <citation type="journal article" date="2022" name="Front. Pharmacol.">
        <title>Structural and functional characterization of a novel scorpion toxin that inhibits NaV1.8 via interactions with the DI voltage sensor and DII pore module.</title>
        <authorList>
            <person name="George K."/>
            <person name="Lopez-Mateos D."/>
            <person name="Abd El-Aziz T.M."/>
            <person name="Xiao Y."/>
            <person name="Kline J."/>
            <person name="Bao H."/>
            <person name="Raza S."/>
            <person name="Stockand J.D."/>
            <person name="Cummins T.R."/>
            <person name="Fornelli L."/>
            <person name="Rowe M.P."/>
            <person name="Yarov-Yarovoy V."/>
            <person name="Rowe A.H."/>
        </authorList>
    </citation>
    <scope>ACTIVITY ON NAV1.8/SCN10A CHANNEL</scope>
    <scope>SYNTHESIS</scope>
</reference>
<keyword id="KW-0903">Direct protein sequencing</keyword>
<keyword id="KW-1015">Disulfide bond</keyword>
<keyword id="KW-0872">Ion channel impairing toxin</keyword>
<keyword id="KW-0528">Neurotoxin</keyword>
<keyword id="KW-0964">Secreted</keyword>
<keyword id="KW-0800">Toxin</keyword>
<keyword id="KW-0738">Voltage-gated sodium channel impairing toxin</keyword>
<organism>
    <name type="scientific">Centruroides sculpturatus</name>
    <name type="common">Arizona bark scorpion</name>
    <dbReference type="NCBI Taxonomy" id="218467"/>
    <lineage>
        <taxon>Eukaryota</taxon>
        <taxon>Metazoa</taxon>
        <taxon>Ecdysozoa</taxon>
        <taxon>Arthropoda</taxon>
        <taxon>Chelicerata</taxon>
        <taxon>Arachnida</taxon>
        <taxon>Scorpiones</taxon>
        <taxon>Buthida</taxon>
        <taxon>Buthoidea</taxon>
        <taxon>Buthidae</taxon>
        <taxon>Centruroides</taxon>
    </lineage>
</organism>
<protein>
    <recommendedName>
        <fullName evidence="4">Toxin NaTx-13</fullName>
    </recommendedName>
</protein>
<feature type="chain" id="PRO_0000459710" description="Toxin NaTx-13" evidence="6">
    <location>
        <begin position="1"/>
        <end position="82"/>
    </location>
</feature>
<feature type="domain" description="LCN-type CS-alpha/beta" evidence="1">
    <location>
        <begin position="6"/>
        <end position="70"/>
    </location>
</feature>
<feature type="disulfide bond" evidence="1">
    <location>
        <begin position="16"/>
        <end position="69"/>
    </location>
</feature>
<feature type="disulfide bond" evidence="1">
    <location>
        <begin position="20"/>
        <end position="44"/>
    </location>
</feature>
<feature type="disulfide bond" evidence="1">
    <location>
        <begin position="30"/>
        <end position="49"/>
    </location>
</feature>
<feature type="disulfide bond" evidence="1">
    <location>
        <begin position="34"/>
        <end position="51"/>
    </location>
</feature>
<dbReference type="SMR" id="P0DRC6"/>
<dbReference type="GO" id="GO:0005576">
    <property type="term" value="C:extracellular region"/>
    <property type="evidence" value="ECO:0007669"/>
    <property type="project" value="UniProtKB-SubCell"/>
</dbReference>
<dbReference type="GO" id="GO:0019871">
    <property type="term" value="F:sodium channel inhibitor activity"/>
    <property type="evidence" value="ECO:0007669"/>
    <property type="project" value="InterPro"/>
</dbReference>
<dbReference type="GO" id="GO:0090729">
    <property type="term" value="F:toxin activity"/>
    <property type="evidence" value="ECO:0007669"/>
    <property type="project" value="UniProtKB-KW"/>
</dbReference>
<dbReference type="GO" id="GO:0006952">
    <property type="term" value="P:defense response"/>
    <property type="evidence" value="ECO:0007669"/>
    <property type="project" value="InterPro"/>
</dbReference>
<dbReference type="CDD" id="cd23106">
    <property type="entry name" value="neurotoxins_LC_scorpion"/>
    <property type="match status" value="1"/>
</dbReference>
<dbReference type="Gene3D" id="3.30.30.10">
    <property type="entry name" value="Knottin, scorpion toxin-like"/>
    <property type="match status" value="1"/>
</dbReference>
<dbReference type="InterPro" id="IPR044062">
    <property type="entry name" value="LCN-type_CS_alpha_beta_dom"/>
</dbReference>
<dbReference type="InterPro" id="IPR003614">
    <property type="entry name" value="Scorpion_toxin-like"/>
</dbReference>
<dbReference type="InterPro" id="IPR036574">
    <property type="entry name" value="Scorpion_toxin-like_sf"/>
</dbReference>
<dbReference type="InterPro" id="IPR018218">
    <property type="entry name" value="Scorpion_toxinL"/>
</dbReference>
<dbReference type="InterPro" id="IPR002061">
    <property type="entry name" value="Scorpion_toxinL/defensin"/>
</dbReference>
<dbReference type="Pfam" id="PF00537">
    <property type="entry name" value="Toxin_3"/>
    <property type="match status" value="1"/>
</dbReference>
<dbReference type="PRINTS" id="PR00285">
    <property type="entry name" value="SCORPNTOXIN"/>
</dbReference>
<dbReference type="SMART" id="SM00505">
    <property type="entry name" value="Knot1"/>
    <property type="match status" value="1"/>
</dbReference>
<dbReference type="SUPFAM" id="SSF57095">
    <property type="entry name" value="Scorpion toxin-like"/>
    <property type="match status" value="1"/>
</dbReference>
<dbReference type="PROSITE" id="PS51863">
    <property type="entry name" value="LCN_CSAB"/>
    <property type="match status" value="1"/>
</dbReference>
<proteinExistence type="evidence at protein level"/>
<comment type="function">
    <text evidence="5">Probable sodium channel inhibitor.</text>
</comment>
<comment type="subcellular location">
    <subcellularLocation>
        <location evidence="2">Secreted</location>
    </subcellularLocation>
</comment>
<comment type="tissue specificity">
    <text evidence="6">Expressed by the venom gland.</text>
</comment>
<comment type="domain">
    <text evidence="5">Has the structural arrangement of an alpha-helix connected to antiparallel beta-sheets by disulfide bonds (CS-alpha/beta).</text>
</comment>
<comment type="miscellaneous">
    <text evidence="3">Negative results: has no effect on Nav1.8/SCN10A sodium channel from the grasshopper mouse, a species pain-resistant to C.sculpturatus venom.</text>
</comment>
<comment type="similarity">
    <text evidence="5">Belongs to the long (4 C-C) scorpion toxin superfamily. Sodium channel inhibitor family.</text>
</comment>